<keyword id="KW-0004">4Fe-4S</keyword>
<keyword id="KW-0963">Cytoplasm</keyword>
<keyword id="KW-0408">Iron</keyword>
<keyword id="KW-0411">Iron-sulfur</keyword>
<keyword id="KW-0479">Metal-binding</keyword>
<keyword id="KW-1185">Reference proteome</keyword>
<keyword id="KW-0949">S-adenosyl-L-methionine</keyword>
<keyword id="KW-0808">Transferase</keyword>
<gene>
    <name evidence="1" type="primary">rimO</name>
    <name type="ordered locus">blr4575</name>
</gene>
<sequence>MDRAPRISFTSLGCPKALVDSERIITRLRAEGYELARKHDGADIVIVNTCGFLDSAKQESLSAIGEAMAENGKVIVTGCMGAEPEQIEQAYPGVLSITGPQQYESVLDAVHRALPPAHNPHLDLVPPQGIKLTPRHYAYLKISEGCNNRCTFCIIPKLRGDLVSRPANDVLREAERLVGAGVKELLVISQDTSAYGVDLKYAESPWKDRQVRAKFLDLARELGELGAWVRLQYVYPYPHVDEVIALMTQGTVLPYLDIPFQHASPEVLKAMKRPAAQDKTLARIKRWREECPDLALRSTFIVGFPGETDADFAYLLDWLDEAEIDRLGCFKYEPVAGATSNAIANPVPEEVKQERYNALMARQQKISARRLKRKVGTRQQIIIDEVGPTVARGRSKADAPEIDGAVYLSSRRPLRVGEIVTAKIERADQYDLHGSVAGF</sequence>
<evidence type="ECO:0000255" key="1">
    <source>
        <dbReference type="HAMAP-Rule" id="MF_01865"/>
    </source>
</evidence>
<evidence type="ECO:0000255" key="2">
    <source>
        <dbReference type="PROSITE-ProRule" id="PRU01266"/>
    </source>
</evidence>
<organism>
    <name type="scientific">Bradyrhizobium diazoefficiens (strain JCM 10833 / BCRC 13528 / IAM 13628 / NBRC 14792 / USDA 110)</name>
    <dbReference type="NCBI Taxonomy" id="224911"/>
    <lineage>
        <taxon>Bacteria</taxon>
        <taxon>Pseudomonadati</taxon>
        <taxon>Pseudomonadota</taxon>
        <taxon>Alphaproteobacteria</taxon>
        <taxon>Hyphomicrobiales</taxon>
        <taxon>Nitrobacteraceae</taxon>
        <taxon>Bradyrhizobium</taxon>
    </lineage>
</organism>
<protein>
    <recommendedName>
        <fullName evidence="1">Ribosomal protein uS12 methylthiotransferase RimO</fullName>
        <shortName evidence="1">uS12 MTTase</shortName>
        <shortName evidence="1">uS12 methylthiotransferase</shortName>
        <ecNumber evidence="1">2.8.4.4</ecNumber>
    </recommendedName>
    <alternativeName>
        <fullName evidence="1">Ribosomal protein uS12 (aspartate-C(3))-methylthiotransferase</fullName>
    </alternativeName>
    <alternativeName>
        <fullName evidence="1">Ribosome maturation factor RimO</fullName>
    </alternativeName>
</protein>
<feature type="chain" id="PRO_0000374717" description="Ribosomal protein uS12 methylthiotransferase RimO">
    <location>
        <begin position="1"/>
        <end position="439"/>
    </location>
</feature>
<feature type="domain" description="MTTase N-terminal" evidence="1">
    <location>
        <begin position="5"/>
        <end position="115"/>
    </location>
</feature>
<feature type="domain" description="Radical SAM core" evidence="2">
    <location>
        <begin position="132"/>
        <end position="369"/>
    </location>
</feature>
<feature type="domain" description="TRAM" evidence="1">
    <location>
        <begin position="372"/>
        <end position="438"/>
    </location>
</feature>
<feature type="binding site" evidence="1">
    <location>
        <position position="14"/>
    </location>
    <ligand>
        <name>[4Fe-4S] cluster</name>
        <dbReference type="ChEBI" id="CHEBI:49883"/>
        <label>1</label>
    </ligand>
</feature>
<feature type="binding site" evidence="1">
    <location>
        <position position="50"/>
    </location>
    <ligand>
        <name>[4Fe-4S] cluster</name>
        <dbReference type="ChEBI" id="CHEBI:49883"/>
        <label>1</label>
    </ligand>
</feature>
<feature type="binding site" evidence="1">
    <location>
        <position position="79"/>
    </location>
    <ligand>
        <name>[4Fe-4S] cluster</name>
        <dbReference type="ChEBI" id="CHEBI:49883"/>
        <label>1</label>
    </ligand>
</feature>
<feature type="binding site" evidence="1">
    <location>
        <position position="146"/>
    </location>
    <ligand>
        <name>[4Fe-4S] cluster</name>
        <dbReference type="ChEBI" id="CHEBI:49883"/>
        <label>2</label>
        <note>4Fe-4S-S-AdoMet</note>
    </ligand>
</feature>
<feature type="binding site" evidence="1">
    <location>
        <position position="150"/>
    </location>
    <ligand>
        <name>[4Fe-4S] cluster</name>
        <dbReference type="ChEBI" id="CHEBI:49883"/>
        <label>2</label>
        <note>4Fe-4S-S-AdoMet</note>
    </ligand>
</feature>
<feature type="binding site" evidence="1">
    <location>
        <position position="153"/>
    </location>
    <ligand>
        <name>[4Fe-4S] cluster</name>
        <dbReference type="ChEBI" id="CHEBI:49883"/>
        <label>2</label>
        <note>4Fe-4S-S-AdoMet</note>
    </ligand>
</feature>
<proteinExistence type="inferred from homology"/>
<comment type="function">
    <text evidence="1">Catalyzes the methylthiolation of an aspartic acid residue of ribosomal protein uS12.</text>
</comment>
<comment type="catalytic activity">
    <reaction evidence="1">
        <text>L-aspartate(89)-[ribosomal protein uS12]-hydrogen + (sulfur carrier)-SH + AH2 + 2 S-adenosyl-L-methionine = 3-methylsulfanyl-L-aspartate(89)-[ribosomal protein uS12]-hydrogen + (sulfur carrier)-H + 5'-deoxyadenosine + L-methionine + A + S-adenosyl-L-homocysteine + 2 H(+)</text>
        <dbReference type="Rhea" id="RHEA:37087"/>
        <dbReference type="Rhea" id="RHEA-COMP:10460"/>
        <dbReference type="Rhea" id="RHEA-COMP:10461"/>
        <dbReference type="Rhea" id="RHEA-COMP:14737"/>
        <dbReference type="Rhea" id="RHEA-COMP:14739"/>
        <dbReference type="ChEBI" id="CHEBI:13193"/>
        <dbReference type="ChEBI" id="CHEBI:15378"/>
        <dbReference type="ChEBI" id="CHEBI:17319"/>
        <dbReference type="ChEBI" id="CHEBI:17499"/>
        <dbReference type="ChEBI" id="CHEBI:29917"/>
        <dbReference type="ChEBI" id="CHEBI:29961"/>
        <dbReference type="ChEBI" id="CHEBI:57844"/>
        <dbReference type="ChEBI" id="CHEBI:57856"/>
        <dbReference type="ChEBI" id="CHEBI:59789"/>
        <dbReference type="ChEBI" id="CHEBI:64428"/>
        <dbReference type="ChEBI" id="CHEBI:73599"/>
        <dbReference type="EC" id="2.8.4.4"/>
    </reaction>
</comment>
<comment type="cofactor">
    <cofactor evidence="1">
        <name>[4Fe-4S] cluster</name>
        <dbReference type="ChEBI" id="CHEBI:49883"/>
    </cofactor>
    <text evidence="1">Binds 2 [4Fe-4S] clusters. One cluster is coordinated with 3 cysteines and an exchangeable S-adenosyl-L-methionine.</text>
</comment>
<comment type="subcellular location">
    <subcellularLocation>
        <location evidence="1">Cytoplasm</location>
    </subcellularLocation>
</comment>
<comment type="similarity">
    <text evidence="1">Belongs to the methylthiotransferase family. RimO subfamily.</text>
</comment>
<dbReference type="EC" id="2.8.4.4" evidence="1"/>
<dbReference type="EMBL" id="BA000040">
    <property type="protein sequence ID" value="BAC49840.1"/>
    <property type="molecule type" value="Genomic_DNA"/>
</dbReference>
<dbReference type="RefSeq" id="NP_771215.1">
    <property type="nucleotide sequence ID" value="NC_004463.1"/>
</dbReference>
<dbReference type="RefSeq" id="WP_011087346.1">
    <property type="nucleotide sequence ID" value="NC_004463.1"/>
</dbReference>
<dbReference type="SMR" id="Q89LG9"/>
<dbReference type="FunCoup" id="Q89LG9">
    <property type="interactions" value="415"/>
</dbReference>
<dbReference type="STRING" id="224911.AAV28_20105"/>
<dbReference type="EnsemblBacteria" id="BAC49840">
    <property type="protein sequence ID" value="BAC49840"/>
    <property type="gene ID" value="BAC49840"/>
</dbReference>
<dbReference type="GeneID" id="46491586"/>
<dbReference type="KEGG" id="bja:blr4575"/>
<dbReference type="PATRIC" id="fig|224911.44.peg.4372"/>
<dbReference type="eggNOG" id="COG0621">
    <property type="taxonomic scope" value="Bacteria"/>
</dbReference>
<dbReference type="HOGENOM" id="CLU_018697_0_0_5"/>
<dbReference type="InParanoid" id="Q89LG9"/>
<dbReference type="OrthoDB" id="9805215at2"/>
<dbReference type="PhylomeDB" id="Q89LG9"/>
<dbReference type="Proteomes" id="UP000002526">
    <property type="component" value="Chromosome"/>
</dbReference>
<dbReference type="GO" id="GO:0005829">
    <property type="term" value="C:cytosol"/>
    <property type="evidence" value="ECO:0000318"/>
    <property type="project" value="GO_Central"/>
</dbReference>
<dbReference type="GO" id="GO:0051539">
    <property type="term" value="F:4 iron, 4 sulfur cluster binding"/>
    <property type="evidence" value="ECO:0000318"/>
    <property type="project" value="GO_Central"/>
</dbReference>
<dbReference type="GO" id="GO:0035599">
    <property type="term" value="F:aspartic acid methylthiotransferase activity"/>
    <property type="evidence" value="ECO:0000318"/>
    <property type="project" value="GO_Central"/>
</dbReference>
<dbReference type="GO" id="GO:0046872">
    <property type="term" value="F:metal ion binding"/>
    <property type="evidence" value="ECO:0007669"/>
    <property type="project" value="UniProtKB-KW"/>
</dbReference>
<dbReference type="GO" id="GO:0103039">
    <property type="term" value="F:protein methylthiotransferase activity"/>
    <property type="evidence" value="ECO:0007669"/>
    <property type="project" value="UniProtKB-EC"/>
</dbReference>
<dbReference type="GO" id="GO:0006400">
    <property type="term" value="P:tRNA modification"/>
    <property type="evidence" value="ECO:0007669"/>
    <property type="project" value="InterPro"/>
</dbReference>
<dbReference type="CDD" id="cd01335">
    <property type="entry name" value="Radical_SAM"/>
    <property type="match status" value="1"/>
</dbReference>
<dbReference type="FunFam" id="2.40.50.140:FF:000060">
    <property type="entry name" value="Ribosomal protein S12 methylthiotransferase RimO"/>
    <property type="match status" value="1"/>
</dbReference>
<dbReference type="FunFam" id="3.40.50.12160:FF:000002">
    <property type="entry name" value="Ribosomal protein S12 methylthiotransferase RimO"/>
    <property type="match status" value="1"/>
</dbReference>
<dbReference type="FunFam" id="3.80.30.20:FF:000001">
    <property type="entry name" value="tRNA-2-methylthio-N(6)-dimethylallyladenosine synthase 2"/>
    <property type="match status" value="1"/>
</dbReference>
<dbReference type="Gene3D" id="3.40.50.12160">
    <property type="entry name" value="Methylthiotransferase, N-terminal domain"/>
    <property type="match status" value="1"/>
</dbReference>
<dbReference type="Gene3D" id="2.40.50.140">
    <property type="entry name" value="Nucleic acid-binding proteins"/>
    <property type="match status" value="1"/>
</dbReference>
<dbReference type="Gene3D" id="3.80.30.20">
    <property type="entry name" value="tm_1862 like domain"/>
    <property type="match status" value="1"/>
</dbReference>
<dbReference type="HAMAP" id="MF_01865">
    <property type="entry name" value="MTTase_RimO"/>
    <property type="match status" value="1"/>
</dbReference>
<dbReference type="InterPro" id="IPR006638">
    <property type="entry name" value="Elp3/MiaA/NifB-like_rSAM"/>
</dbReference>
<dbReference type="InterPro" id="IPR005839">
    <property type="entry name" value="Methylthiotransferase"/>
</dbReference>
<dbReference type="InterPro" id="IPR020612">
    <property type="entry name" value="Methylthiotransferase_CS"/>
</dbReference>
<dbReference type="InterPro" id="IPR013848">
    <property type="entry name" value="Methylthiotransferase_N"/>
</dbReference>
<dbReference type="InterPro" id="IPR038135">
    <property type="entry name" value="Methylthiotransferase_N_sf"/>
</dbReference>
<dbReference type="InterPro" id="IPR012340">
    <property type="entry name" value="NA-bd_OB-fold"/>
</dbReference>
<dbReference type="InterPro" id="IPR005840">
    <property type="entry name" value="Ribosomal_uS12_MeSTrfase_RimO"/>
</dbReference>
<dbReference type="InterPro" id="IPR007197">
    <property type="entry name" value="rSAM"/>
</dbReference>
<dbReference type="InterPro" id="IPR023404">
    <property type="entry name" value="rSAM_horseshoe"/>
</dbReference>
<dbReference type="InterPro" id="IPR002792">
    <property type="entry name" value="TRAM_dom"/>
</dbReference>
<dbReference type="NCBIfam" id="TIGR01125">
    <property type="entry name" value="30S ribosomal protein S12 methylthiotransferase RimO"/>
    <property type="match status" value="1"/>
</dbReference>
<dbReference type="NCBIfam" id="TIGR00089">
    <property type="entry name" value="MiaB/RimO family radical SAM methylthiotransferase"/>
    <property type="match status" value="1"/>
</dbReference>
<dbReference type="PANTHER" id="PTHR43837">
    <property type="entry name" value="RIBOSOMAL PROTEIN S12 METHYLTHIOTRANSFERASE RIMO"/>
    <property type="match status" value="1"/>
</dbReference>
<dbReference type="PANTHER" id="PTHR43837:SF1">
    <property type="entry name" value="RIBOSOMAL PROTEIN US12 METHYLTHIOTRANSFERASE RIMO"/>
    <property type="match status" value="1"/>
</dbReference>
<dbReference type="Pfam" id="PF04055">
    <property type="entry name" value="Radical_SAM"/>
    <property type="match status" value="1"/>
</dbReference>
<dbReference type="Pfam" id="PF18693">
    <property type="entry name" value="TRAM_2"/>
    <property type="match status" value="1"/>
</dbReference>
<dbReference type="Pfam" id="PF00919">
    <property type="entry name" value="UPF0004"/>
    <property type="match status" value="1"/>
</dbReference>
<dbReference type="SFLD" id="SFLDG01082">
    <property type="entry name" value="B12-binding_domain_containing"/>
    <property type="match status" value="1"/>
</dbReference>
<dbReference type="SFLD" id="SFLDG01061">
    <property type="entry name" value="methylthiotransferase"/>
    <property type="match status" value="1"/>
</dbReference>
<dbReference type="SFLD" id="SFLDF00274">
    <property type="entry name" value="ribosomal_protein_S12_methylth"/>
    <property type="match status" value="1"/>
</dbReference>
<dbReference type="SMART" id="SM00729">
    <property type="entry name" value="Elp3"/>
    <property type="match status" value="1"/>
</dbReference>
<dbReference type="SUPFAM" id="SSF102114">
    <property type="entry name" value="Radical SAM enzymes"/>
    <property type="match status" value="1"/>
</dbReference>
<dbReference type="PROSITE" id="PS51449">
    <property type="entry name" value="MTTASE_N"/>
    <property type="match status" value="1"/>
</dbReference>
<dbReference type="PROSITE" id="PS01278">
    <property type="entry name" value="MTTASE_RADICAL"/>
    <property type="match status" value="1"/>
</dbReference>
<dbReference type="PROSITE" id="PS51918">
    <property type="entry name" value="RADICAL_SAM"/>
    <property type="match status" value="1"/>
</dbReference>
<dbReference type="PROSITE" id="PS50926">
    <property type="entry name" value="TRAM"/>
    <property type="match status" value="1"/>
</dbReference>
<reference key="1">
    <citation type="journal article" date="2002" name="DNA Res.">
        <title>Complete genomic sequence of nitrogen-fixing symbiotic bacterium Bradyrhizobium japonicum USDA110.</title>
        <authorList>
            <person name="Kaneko T."/>
            <person name="Nakamura Y."/>
            <person name="Sato S."/>
            <person name="Minamisawa K."/>
            <person name="Uchiumi T."/>
            <person name="Sasamoto S."/>
            <person name="Watanabe A."/>
            <person name="Idesawa K."/>
            <person name="Iriguchi M."/>
            <person name="Kawashima K."/>
            <person name="Kohara M."/>
            <person name="Matsumoto M."/>
            <person name="Shimpo S."/>
            <person name="Tsuruoka H."/>
            <person name="Wada T."/>
            <person name="Yamada M."/>
            <person name="Tabata S."/>
        </authorList>
    </citation>
    <scope>NUCLEOTIDE SEQUENCE [LARGE SCALE GENOMIC DNA]</scope>
    <source>
        <strain>JCM 10833 / BCRC 13528 / IAM 13628 / NBRC 14792 / USDA 110</strain>
    </source>
</reference>
<name>RIMO_BRADU</name>
<accession>Q89LG9</accession>